<organism>
    <name type="scientific">Haloarcula marismortui (strain ATCC 43049 / DSM 3752 / JCM 8966 / VKM B-1809)</name>
    <name type="common">Halobacterium marismortui</name>
    <dbReference type="NCBI Taxonomy" id="272569"/>
    <lineage>
        <taxon>Archaea</taxon>
        <taxon>Methanobacteriati</taxon>
        <taxon>Methanobacteriota</taxon>
        <taxon>Stenosarchaea group</taxon>
        <taxon>Halobacteria</taxon>
        <taxon>Halobacteriales</taxon>
        <taxon>Haloarculaceae</taxon>
        <taxon>Haloarcula</taxon>
    </lineage>
</organism>
<proteinExistence type="inferred from homology"/>
<accession>Q5UX95</accession>
<gene>
    <name evidence="1" type="primary">deoC</name>
    <name type="ordered locus">rrnAC3429</name>
</gene>
<sequence length="231" mass="24269">MDDIPDRIEHTVLGPTTTPADVRTCLDEALQYGMRACIPPWAVPLATEYANVPLTAVIDFPHGQGQTDSVCQAAKLAWDAGADELDMVCNVGLLKAGEDDAVRDHITEVVASVPVPVKVIVEAPLLSDAELERVGQLVADADAAYLKTATGFSEGGATVHDVEILSKYLPVKASGGVGSWADAKAMFEAGAERIGASSGDTIVREWQAETAGETVTEPESDRDGADTTDGY</sequence>
<dbReference type="EC" id="4.1.2.4" evidence="1"/>
<dbReference type="EMBL" id="AY596297">
    <property type="protein sequence ID" value="AAV48108.1"/>
    <property type="molecule type" value="Genomic_DNA"/>
</dbReference>
<dbReference type="RefSeq" id="WP_007189048.1">
    <property type="nucleotide sequence ID" value="NZ_CP039138.1"/>
</dbReference>
<dbReference type="SMR" id="Q5UX95"/>
<dbReference type="STRING" id="272569.rrnAC3429"/>
<dbReference type="PaxDb" id="272569-rrnAC3429"/>
<dbReference type="EnsemblBacteria" id="AAV48108">
    <property type="protein sequence ID" value="AAV48108"/>
    <property type="gene ID" value="rrnAC3429"/>
</dbReference>
<dbReference type="GeneID" id="40154213"/>
<dbReference type="KEGG" id="hma:rrnAC3429"/>
<dbReference type="PATRIC" id="fig|272569.17.peg.3945"/>
<dbReference type="eggNOG" id="arCOG04320">
    <property type="taxonomic scope" value="Archaea"/>
</dbReference>
<dbReference type="HOGENOM" id="CLU_053595_0_1_2"/>
<dbReference type="UniPathway" id="UPA00002">
    <property type="reaction ID" value="UER00468"/>
</dbReference>
<dbReference type="Proteomes" id="UP000001169">
    <property type="component" value="Chromosome I"/>
</dbReference>
<dbReference type="GO" id="GO:0005737">
    <property type="term" value="C:cytoplasm"/>
    <property type="evidence" value="ECO:0007669"/>
    <property type="project" value="UniProtKB-SubCell"/>
</dbReference>
<dbReference type="GO" id="GO:0004139">
    <property type="term" value="F:deoxyribose-phosphate aldolase activity"/>
    <property type="evidence" value="ECO:0007669"/>
    <property type="project" value="UniProtKB-UniRule"/>
</dbReference>
<dbReference type="GO" id="GO:0006018">
    <property type="term" value="P:2-deoxyribose 1-phosphate catabolic process"/>
    <property type="evidence" value="ECO:0007669"/>
    <property type="project" value="UniProtKB-UniRule"/>
</dbReference>
<dbReference type="GO" id="GO:0016052">
    <property type="term" value="P:carbohydrate catabolic process"/>
    <property type="evidence" value="ECO:0007669"/>
    <property type="project" value="TreeGrafter"/>
</dbReference>
<dbReference type="GO" id="GO:0009264">
    <property type="term" value="P:deoxyribonucleotide catabolic process"/>
    <property type="evidence" value="ECO:0007669"/>
    <property type="project" value="InterPro"/>
</dbReference>
<dbReference type="CDD" id="cd00959">
    <property type="entry name" value="DeoC"/>
    <property type="match status" value="1"/>
</dbReference>
<dbReference type="Gene3D" id="3.20.20.70">
    <property type="entry name" value="Aldolase class I"/>
    <property type="match status" value="1"/>
</dbReference>
<dbReference type="HAMAP" id="MF_00114">
    <property type="entry name" value="DeoC_type1"/>
    <property type="match status" value="1"/>
</dbReference>
<dbReference type="InterPro" id="IPR013785">
    <property type="entry name" value="Aldolase_TIM"/>
</dbReference>
<dbReference type="InterPro" id="IPR011343">
    <property type="entry name" value="DeoC"/>
</dbReference>
<dbReference type="InterPro" id="IPR002915">
    <property type="entry name" value="DeoC/FbaB/LacD_aldolase"/>
</dbReference>
<dbReference type="InterPro" id="IPR028581">
    <property type="entry name" value="DeoC_typeI"/>
</dbReference>
<dbReference type="NCBIfam" id="TIGR00126">
    <property type="entry name" value="deoC"/>
    <property type="match status" value="1"/>
</dbReference>
<dbReference type="PANTHER" id="PTHR10889">
    <property type="entry name" value="DEOXYRIBOSE-PHOSPHATE ALDOLASE"/>
    <property type="match status" value="1"/>
</dbReference>
<dbReference type="PANTHER" id="PTHR10889:SF1">
    <property type="entry name" value="DEOXYRIBOSE-PHOSPHATE ALDOLASE"/>
    <property type="match status" value="1"/>
</dbReference>
<dbReference type="PIRSF" id="PIRSF001357">
    <property type="entry name" value="DeoC"/>
    <property type="match status" value="1"/>
</dbReference>
<dbReference type="SMART" id="SM01133">
    <property type="entry name" value="DeoC"/>
    <property type="match status" value="1"/>
</dbReference>
<dbReference type="SUPFAM" id="SSF51569">
    <property type="entry name" value="Aldolase"/>
    <property type="match status" value="1"/>
</dbReference>
<comment type="function">
    <text evidence="1">Catalyzes a reversible aldol reaction between acetaldehyde and D-glyceraldehyde 3-phosphate to generate 2-deoxy-D-ribose 5-phosphate.</text>
</comment>
<comment type="catalytic activity">
    <reaction evidence="1">
        <text>2-deoxy-D-ribose 5-phosphate = D-glyceraldehyde 3-phosphate + acetaldehyde</text>
        <dbReference type="Rhea" id="RHEA:12821"/>
        <dbReference type="ChEBI" id="CHEBI:15343"/>
        <dbReference type="ChEBI" id="CHEBI:59776"/>
        <dbReference type="ChEBI" id="CHEBI:62877"/>
        <dbReference type="EC" id="4.1.2.4"/>
    </reaction>
</comment>
<comment type="pathway">
    <text evidence="1">Carbohydrate degradation; 2-deoxy-D-ribose 1-phosphate degradation; D-glyceraldehyde 3-phosphate and acetaldehyde from 2-deoxy-alpha-D-ribose 1-phosphate: step 2/2.</text>
</comment>
<comment type="subcellular location">
    <subcellularLocation>
        <location evidence="1">Cytoplasm</location>
    </subcellularLocation>
</comment>
<comment type="similarity">
    <text evidence="1">Belongs to the DeoC/FbaB aldolase family. DeoC type 1 subfamily.</text>
</comment>
<keyword id="KW-0963">Cytoplasm</keyword>
<keyword id="KW-0456">Lyase</keyword>
<keyword id="KW-1185">Reference proteome</keyword>
<keyword id="KW-0704">Schiff base</keyword>
<evidence type="ECO:0000255" key="1">
    <source>
        <dbReference type="HAMAP-Rule" id="MF_00114"/>
    </source>
</evidence>
<evidence type="ECO:0000256" key="2">
    <source>
        <dbReference type="SAM" id="MobiDB-lite"/>
    </source>
</evidence>
<reference key="1">
    <citation type="journal article" date="2004" name="Genome Res.">
        <title>Genome sequence of Haloarcula marismortui: a halophilic archaeon from the Dead Sea.</title>
        <authorList>
            <person name="Baliga N.S."/>
            <person name="Bonneau R."/>
            <person name="Facciotti M.T."/>
            <person name="Pan M."/>
            <person name="Glusman G."/>
            <person name="Deutsch E.W."/>
            <person name="Shannon P."/>
            <person name="Chiu Y."/>
            <person name="Weng R.S."/>
            <person name="Gan R.R."/>
            <person name="Hung P."/>
            <person name="Date S.V."/>
            <person name="Marcotte E."/>
            <person name="Hood L."/>
            <person name="Ng W.V."/>
        </authorList>
    </citation>
    <scope>NUCLEOTIDE SEQUENCE [LARGE SCALE GENOMIC DNA]</scope>
    <source>
        <strain>ATCC 43049 / DSM 3752 / JCM 8966 / VKM B-1809</strain>
    </source>
</reference>
<feature type="chain" id="PRO_0000057287" description="Deoxyribose-phosphate aldolase">
    <location>
        <begin position="1"/>
        <end position="231"/>
    </location>
</feature>
<feature type="region of interest" description="Disordered" evidence="2">
    <location>
        <begin position="206"/>
        <end position="231"/>
    </location>
</feature>
<feature type="active site" description="Proton donor/acceptor" evidence="1">
    <location>
        <position position="86"/>
    </location>
</feature>
<feature type="active site" description="Schiff-base intermediate with acetaldehyde" evidence="1">
    <location>
        <position position="147"/>
    </location>
</feature>
<feature type="active site" description="Proton donor/acceptor" evidence="1">
    <location>
        <position position="172"/>
    </location>
</feature>
<protein>
    <recommendedName>
        <fullName evidence="1">Deoxyribose-phosphate aldolase</fullName>
        <shortName evidence="1">DERA</shortName>
        <ecNumber evidence="1">4.1.2.4</ecNumber>
    </recommendedName>
    <alternativeName>
        <fullName evidence="1">2-deoxy-D-ribose 5-phosphate aldolase</fullName>
    </alternativeName>
    <alternativeName>
        <fullName evidence="1">Phosphodeoxyriboaldolase</fullName>
        <shortName evidence="1">Deoxyriboaldolase</shortName>
    </alternativeName>
</protein>
<name>DEOC_HALMA</name>